<name>Y2227_MYCBO</name>
<reference key="1">
    <citation type="journal article" date="2003" name="Proc. Natl. Acad. Sci. U.S.A.">
        <title>The complete genome sequence of Mycobacterium bovis.</title>
        <authorList>
            <person name="Garnier T."/>
            <person name="Eiglmeier K."/>
            <person name="Camus J.-C."/>
            <person name="Medina N."/>
            <person name="Mansoor H."/>
            <person name="Pryor M."/>
            <person name="Duthoy S."/>
            <person name="Grondin S."/>
            <person name="Lacroix C."/>
            <person name="Monsempe C."/>
            <person name="Simon S."/>
            <person name="Harris B."/>
            <person name="Atkin R."/>
            <person name="Doggett J."/>
            <person name="Mayes R."/>
            <person name="Keating L."/>
            <person name="Wheeler P.R."/>
            <person name="Parkhill J."/>
            <person name="Barrell B.G."/>
            <person name="Cole S.T."/>
            <person name="Gordon S.V."/>
            <person name="Hewinson R.G."/>
        </authorList>
    </citation>
    <scope>NUCLEOTIDE SEQUENCE [LARGE SCALE GENOMIC DNA]</scope>
    <source>
        <strain>ATCC BAA-935 / AF2122/97</strain>
    </source>
</reference>
<reference key="2">
    <citation type="journal article" date="2017" name="Genome Announc.">
        <title>Updated reference genome sequence and annotation of Mycobacterium bovis AF2122/97.</title>
        <authorList>
            <person name="Malone K.M."/>
            <person name="Farrell D."/>
            <person name="Stuber T.P."/>
            <person name="Schubert O.T."/>
            <person name="Aebersold R."/>
            <person name="Robbe-Austerman S."/>
            <person name="Gordon S.V."/>
        </authorList>
    </citation>
    <scope>NUCLEOTIDE SEQUENCE [LARGE SCALE GENOMIC DNA]</scope>
    <scope>GENOME REANNOTATION</scope>
    <source>
        <strain>ATCC BAA-935 / AF2122/97</strain>
    </source>
</reference>
<reference key="3">
    <citation type="journal article" date="2005" name="FEMS Microbiol. Lett.">
        <title>Thiol specific oxidative stress response in Mycobacteria.</title>
        <authorList>
            <person name="Dosanjh N.S."/>
            <person name="Rawat M."/>
            <person name="Chung J.-H."/>
            <person name="Av-Gay Y."/>
        </authorList>
    </citation>
    <scope>IDENTIFICATION BY MASS SPECTROMETRY</scope>
    <scope>INDUCTION</scope>
    <source>
        <strain>BCG / Pasteur</strain>
    </source>
</reference>
<gene>
    <name type="ordered locus">BQ2027_MB2227C</name>
</gene>
<evidence type="ECO:0000269" key="1">
    <source>
    </source>
</evidence>
<evidence type="ECO:0000305" key="2"/>
<comment type="induction">
    <text evidence="1">Induced in response to the thiol oxidant diamide.</text>
</comment>
<comment type="similarity">
    <text evidence="2">Belongs to the HesB/IscA family.</text>
</comment>
<protein>
    <recommendedName>
        <fullName>Protein Mb2227c</fullName>
    </recommendedName>
</protein>
<proteinExistence type="evidence at protein level"/>
<dbReference type="EMBL" id="LT708304">
    <property type="protein sequence ID" value="SIU00835.1"/>
    <property type="molecule type" value="Genomic_DNA"/>
</dbReference>
<dbReference type="RefSeq" id="NP_855876.1">
    <property type="nucleotide sequence ID" value="NC_002945.3"/>
</dbReference>
<dbReference type="RefSeq" id="WP_003411418.1">
    <property type="nucleotide sequence ID" value="NC_002945.4"/>
</dbReference>
<dbReference type="SMR" id="P0A5B0"/>
<dbReference type="KEGG" id="mbo:BQ2027_MB2227C"/>
<dbReference type="PATRIC" id="fig|233413.5.peg.2443"/>
<dbReference type="Proteomes" id="UP000001419">
    <property type="component" value="Chromosome"/>
</dbReference>
<dbReference type="GO" id="GO:0051537">
    <property type="term" value="F:2 iron, 2 sulfur cluster binding"/>
    <property type="evidence" value="ECO:0007669"/>
    <property type="project" value="TreeGrafter"/>
</dbReference>
<dbReference type="GO" id="GO:0051539">
    <property type="term" value="F:4 iron, 4 sulfur cluster binding"/>
    <property type="evidence" value="ECO:0007669"/>
    <property type="project" value="TreeGrafter"/>
</dbReference>
<dbReference type="GO" id="GO:0005506">
    <property type="term" value="F:iron ion binding"/>
    <property type="evidence" value="ECO:0007669"/>
    <property type="project" value="TreeGrafter"/>
</dbReference>
<dbReference type="GO" id="GO:0016226">
    <property type="term" value="P:iron-sulfur cluster assembly"/>
    <property type="evidence" value="ECO:0007669"/>
    <property type="project" value="InterPro"/>
</dbReference>
<dbReference type="FunFam" id="2.60.300.12:FF:000003">
    <property type="entry name" value="Iron-sulfur cluster insertion protein ErpA"/>
    <property type="match status" value="1"/>
</dbReference>
<dbReference type="Gene3D" id="2.60.300.12">
    <property type="entry name" value="HesB-like domain"/>
    <property type="match status" value="1"/>
</dbReference>
<dbReference type="InterPro" id="IPR000361">
    <property type="entry name" value="FeS_biogenesis"/>
</dbReference>
<dbReference type="InterPro" id="IPR016092">
    <property type="entry name" value="FeS_cluster_insertion"/>
</dbReference>
<dbReference type="InterPro" id="IPR017870">
    <property type="entry name" value="FeS_cluster_insertion_CS"/>
</dbReference>
<dbReference type="InterPro" id="IPR035903">
    <property type="entry name" value="HesB-like_dom_sf"/>
</dbReference>
<dbReference type="NCBIfam" id="TIGR00049">
    <property type="entry name" value="iron-sulfur cluster assembly accessory protein"/>
    <property type="match status" value="1"/>
</dbReference>
<dbReference type="PANTHER" id="PTHR43011">
    <property type="entry name" value="IRON-SULFUR CLUSTER ASSEMBLY 2 HOMOLOG, MITOCHONDRIAL"/>
    <property type="match status" value="1"/>
</dbReference>
<dbReference type="PANTHER" id="PTHR43011:SF1">
    <property type="entry name" value="IRON-SULFUR CLUSTER ASSEMBLY 2 HOMOLOG, MITOCHONDRIAL"/>
    <property type="match status" value="1"/>
</dbReference>
<dbReference type="Pfam" id="PF01521">
    <property type="entry name" value="Fe-S_biosyn"/>
    <property type="match status" value="1"/>
</dbReference>
<dbReference type="SUPFAM" id="SSF89360">
    <property type="entry name" value="HesB-like domain"/>
    <property type="match status" value="1"/>
</dbReference>
<dbReference type="PROSITE" id="PS01152">
    <property type="entry name" value="HESB"/>
    <property type="match status" value="1"/>
</dbReference>
<accession>P0A5B0</accession>
<accession>A0A1R3Y193</accession>
<accession>Q10393</accession>
<accession>X2BKD8</accession>
<feature type="chain" id="PRO_0000077018" description="Protein Mb2227c">
    <location>
        <begin position="1"/>
        <end position="118"/>
    </location>
</feature>
<organism>
    <name type="scientific">Mycobacterium bovis (strain ATCC BAA-935 / AF2122/97)</name>
    <dbReference type="NCBI Taxonomy" id="233413"/>
    <lineage>
        <taxon>Bacteria</taxon>
        <taxon>Bacillati</taxon>
        <taxon>Actinomycetota</taxon>
        <taxon>Actinomycetes</taxon>
        <taxon>Mycobacteriales</taxon>
        <taxon>Mycobacteriaceae</taxon>
        <taxon>Mycobacterium</taxon>
        <taxon>Mycobacterium tuberculosis complex</taxon>
    </lineage>
</organism>
<keyword id="KW-1185">Reference proteome</keyword>
<sequence length="118" mass="12544">MTVQNEPSAKTHGVILTEAAAAKAKSLLDQEGRDDLALRIAVQPGGCAGLRYNLFFDDRTLDGDQTAEFGGVRLIVDRMSAPYVEGASIDFVDTIEKQGFTIDNPNATGSCACGDSFN</sequence>